<evidence type="ECO:0000255" key="1">
    <source>
        <dbReference type="HAMAP-Rule" id="MF_00135"/>
    </source>
</evidence>
<evidence type="ECO:0007829" key="2">
    <source>
        <dbReference type="PDB" id="4AAJ"/>
    </source>
</evidence>
<name>TRPF_PYRFU</name>
<comment type="catalytic activity">
    <reaction evidence="1">
        <text>N-(5-phospho-beta-D-ribosyl)anthranilate = 1-(2-carboxyphenylamino)-1-deoxy-D-ribulose 5-phosphate</text>
        <dbReference type="Rhea" id="RHEA:21540"/>
        <dbReference type="ChEBI" id="CHEBI:18277"/>
        <dbReference type="ChEBI" id="CHEBI:58613"/>
        <dbReference type="EC" id="5.3.1.24"/>
    </reaction>
</comment>
<comment type="pathway">
    <text evidence="1">Amino-acid biosynthesis; L-tryptophan biosynthesis; L-tryptophan from chorismate: step 3/5.</text>
</comment>
<comment type="similarity">
    <text evidence="1">Belongs to the TrpF family.</text>
</comment>
<proteinExistence type="evidence at protein level"/>
<organism>
    <name type="scientific">Pyrococcus furiosus (strain ATCC 43587 / DSM 3638 / JCM 8422 / Vc1)</name>
    <dbReference type="NCBI Taxonomy" id="186497"/>
    <lineage>
        <taxon>Archaea</taxon>
        <taxon>Methanobacteriati</taxon>
        <taxon>Methanobacteriota</taxon>
        <taxon>Thermococci</taxon>
        <taxon>Thermococcales</taxon>
        <taxon>Thermococcaceae</taxon>
        <taxon>Pyrococcus</taxon>
    </lineage>
</organism>
<sequence length="208" mass="22994">MFVKICGIKSLEELEIVEKHADATGVVVNSNSKRRIPLEKAREIIENSAIPVFLVSTMVGFSEWAMAIERTGAQYIQVHSNALPQTIDTLKKEFGVFVMKAFRVPTISKNPEEDANRLLSEISRYNADMVLLDTGAGSGKLHDLRVSSLVARKIPVIVAGGLNAENVEEVIKVVKPYGVDVSSGVEKYGIKDPKLVEEFVRRAKNVVW</sequence>
<feature type="chain" id="PRO_0000154412" description="N-(5'-phosphoribosyl)anthranilate isomerase">
    <location>
        <begin position="1"/>
        <end position="208"/>
    </location>
</feature>
<feature type="strand" evidence="2">
    <location>
        <begin position="2"/>
        <end position="5"/>
    </location>
</feature>
<feature type="helix" evidence="2">
    <location>
        <begin position="11"/>
        <end position="18"/>
    </location>
</feature>
<feature type="strand" evidence="2">
    <location>
        <begin position="22"/>
        <end position="27"/>
    </location>
</feature>
<feature type="strand" evidence="2">
    <location>
        <begin position="29"/>
        <end position="32"/>
    </location>
</feature>
<feature type="helix" evidence="2">
    <location>
        <begin position="38"/>
        <end position="47"/>
    </location>
</feature>
<feature type="strand" evidence="2">
    <location>
        <begin position="52"/>
        <end position="56"/>
    </location>
</feature>
<feature type="helix" evidence="2">
    <location>
        <begin position="61"/>
        <end position="71"/>
    </location>
</feature>
<feature type="strand" evidence="2">
    <location>
        <begin position="74"/>
        <end position="78"/>
    </location>
</feature>
<feature type="helix" evidence="2">
    <location>
        <begin position="84"/>
        <end position="94"/>
    </location>
</feature>
<feature type="strand" evidence="2">
    <location>
        <begin position="97"/>
        <end position="103"/>
    </location>
</feature>
<feature type="helix" evidence="2">
    <location>
        <begin position="111"/>
        <end position="124"/>
    </location>
</feature>
<feature type="strand" evidence="2">
    <location>
        <begin position="128"/>
        <end position="133"/>
    </location>
</feature>
<feature type="helix" evidence="2">
    <location>
        <begin position="145"/>
        <end position="153"/>
    </location>
</feature>
<feature type="strand" evidence="2">
    <location>
        <begin position="156"/>
        <end position="161"/>
    </location>
</feature>
<feature type="turn" evidence="2">
    <location>
        <begin position="164"/>
        <end position="166"/>
    </location>
</feature>
<feature type="helix" evidence="2">
    <location>
        <begin position="167"/>
        <end position="174"/>
    </location>
</feature>
<feature type="strand" evidence="2">
    <location>
        <begin position="177"/>
        <end position="182"/>
    </location>
</feature>
<feature type="helix" evidence="2">
    <location>
        <begin position="183"/>
        <end position="185"/>
    </location>
</feature>
<feature type="helix" evidence="2">
    <location>
        <begin position="193"/>
        <end position="205"/>
    </location>
</feature>
<dbReference type="EC" id="5.3.1.24" evidence="1"/>
<dbReference type="EMBL" id="AE009950">
    <property type="protein sequence ID" value="AAL81831.1"/>
    <property type="molecule type" value="Genomic_DNA"/>
</dbReference>
<dbReference type="RefSeq" id="WP_011012853.1">
    <property type="nucleotide sequence ID" value="NZ_CP023154.1"/>
</dbReference>
<dbReference type="PDB" id="4AAJ">
    <property type="method" value="X-ray"/>
    <property type="resolution" value="1.75 A"/>
    <property type="chains" value="A=1-208"/>
</dbReference>
<dbReference type="PDBsum" id="4AAJ"/>
<dbReference type="SMR" id="Q8U092"/>
<dbReference type="STRING" id="186497.PF1707"/>
<dbReference type="PaxDb" id="186497-PF1707"/>
<dbReference type="KEGG" id="pfu:PF1707"/>
<dbReference type="PATRIC" id="fig|186497.12.peg.1775"/>
<dbReference type="eggNOG" id="arCOG01983">
    <property type="taxonomic scope" value="Archaea"/>
</dbReference>
<dbReference type="HOGENOM" id="CLU_076364_2_1_2"/>
<dbReference type="OrthoDB" id="27513at2157"/>
<dbReference type="PhylomeDB" id="Q8U092"/>
<dbReference type="BRENDA" id="5.3.1.24">
    <property type="organism ID" value="5243"/>
</dbReference>
<dbReference type="UniPathway" id="UPA00035">
    <property type="reaction ID" value="UER00042"/>
</dbReference>
<dbReference type="EvolutionaryTrace" id="Q8U092"/>
<dbReference type="Proteomes" id="UP000001013">
    <property type="component" value="Chromosome"/>
</dbReference>
<dbReference type="GO" id="GO:0004640">
    <property type="term" value="F:phosphoribosylanthranilate isomerase activity"/>
    <property type="evidence" value="ECO:0007669"/>
    <property type="project" value="UniProtKB-UniRule"/>
</dbReference>
<dbReference type="GO" id="GO:0000162">
    <property type="term" value="P:L-tryptophan biosynthetic process"/>
    <property type="evidence" value="ECO:0007669"/>
    <property type="project" value="UniProtKB-UniRule"/>
</dbReference>
<dbReference type="CDD" id="cd00405">
    <property type="entry name" value="PRAI"/>
    <property type="match status" value="1"/>
</dbReference>
<dbReference type="Gene3D" id="3.20.20.70">
    <property type="entry name" value="Aldolase class I"/>
    <property type="match status" value="1"/>
</dbReference>
<dbReference type="HAMAP" id="MF_00135">
    <property type="entry name" value="PRAI"/>
    <property type="match status" value="1"/>
</dbReference>
<dbReference type="InterPro" id="IPR013785">
    <property type="entry name" value="Aldolase_TIM"/>
</dbReference>
<dbReference type="InterPro" id="IPR001240">
    <property type="entry name" value="PRAI_dom"/>
</dbReference>
<dbReference type="InterPro" id="IPR011060">
    <property type="entry name" value="RibuloseP-bd_barrel"/>
</dbReference>
<dbReference type="InterPro" id="IPR044643">
    <property type="entry name" value="TrpF_fam"/>
</dbReference>
<dbReference type="NCBIfam" id="NF002304">
    <property type="entry name" value="PRK01222.2-4"/>
    <property type="match status" value="1"/>
</dbReference>
<dbReference type="PANTHER" id="PTHR42894">
    <property type="entry name" value="N-(5'-PHOSPHORIBOSYL)ANTHRANILATE ISOMERASE"/>
    <property type="match status" value="1"/>
</dbReference>
<dbReference type="PANTHER" id="PTHR42894:SF1">
    <property type="entry name" value="N-(5'-PHOSPHORIBOSYL)ANTHRANILATE ISOMERASE"/>
    <property type="match status" value="1"/>
</dbReference>
<dbReference type="Pfam" id="PF00697">
    <property type="entry name" value="PRAI"/>
    <property type="match status" value="1"/>
</dbReference>
<dbReference type="SUPFAM" id="SSF51366">
    <property type="entry name" value="Ribulose-phoshate binding barrel"/>
    <property type="match status" value="1"/>
</dbReference>
<reference key="1">
    <citation type="journal article" date="1999" name="Genetics">
        <title>Divergence of the hyperthermophilic archaea Pyrococcus furiosus and P. horikoshii inferred from complete genomic sequences.</title>
        <authorList>
            <person name="Maeder D.L."/>
            <person name="Weiss R.B."/>
            <person name="Dunn D.M."/>
            <person name="Cherry J.L."/>
            <person name="Gonzalez J.M."/>
            <person name="DiRuggiero J."/>
            <person name="Robb F.T."/>
        </authorList>
    </citation>
    <scope>NUCLEOTIDE SEQUENCE [LARGE SCALE GENOMIC DNA]</scope>
    <source>
        <strain>ATCC 43587 / DSM 3638 / JCM 8422 / Vc1</strain>
    </source>
</reference>
<keyword id="KW-0002">3D-structure</keyword>
<keyword id="KW-0028">Amino-acid biosynthesis</keyword>
<keyword id="KW-0057">Aromatic amino acid biosynthesis</keyword>
<keyword id="KW-0413">Isomerase</keyword>
<keyword id="KW-1185">Reference proteome</keyword>
<keyword id="KW-0822">Tryptophan biosynthesis</keyword>
<gene>
    <name evidence="1" type="primary">trpF</name>
    <name type="ordered locus">PF1707</name>
</gene>
<protein>
    <recommendedName>
        <fullName evidence="1">N-(5'-phosphoribosyl)anthranilate isomerase</fullName>
        <shortName evidence="1">PRAI</shortName>
        <ecNumber evidence="1">5.3.1.24</ecNumber>
    </recommendedName>
</protein>
<accession>Q8U092</accession>